<accession>Q98MX9</accession>
<feature type="chain" id="PRO_0000075673" description="Bifunctional enzyme IspD/IspF">
    <location>
        <begin position="1"/>
        <end position="407"/>
    </location>
</feature>
<feature type="region of interest" description="2-C-methyl-D-erythritol 4-phosphate cytidylyltransferase" evidence="1">
    <location>
        <begin position="1"/>
        <end position="246"/>
    </location>
</feature>
<feature type="region of interest" description="2-C-methyl-D-erythritol 2,4-cyclodiphosphate synthase" evidence="1">
    <location>
        <begin position="247"/>
        <end position="407"/>
    </location>
</feature>
<feature type="binding site" evidence="1">
    <location>
        <begin position="253"/>
        <end position="255"/>
    </location>
    <ligand>
        <name>4-CDP-2-C-methyl-D-erythritol 2-phosphate</name>
        <dbReference type="ChEBI" id="CHEBI:57919"/>
    </ligand>
</feature>
<feature type="binding site" evidence="1">
    <location>
        <position position="253"/>
    </location>
    <ligand>
        <name>a divalent metal cation</name>
        <dbReference type="ChEBI" id="CHEBI:60240"/>
    </ligand>
</feature>
<feature type="binding site" evidence="1">
    <location>
        <position position="255"/>
    </location>
    <ligand>
        <name>a divalent metal cation</name>
        <dbReference type="ChEBI" id="CHEBI:60240"/>
    </ligand>
</feature>
<feature type="binding site" evidence="1">
    <location>
        <begin position="279"/>
        <end position="280"/>
    </location>
    <ligand>
        <name>4-CDP-2-C-methyl-D-erythritol 2-phosphate</name>
        <dbReference type="ChEBI" id="CHEBI:57919"/>
    </ligand>
</feature>
<feature type="binding site" evidence="1">
    <location>
        <position position="287"/>
    </location>
    <ligand>
        <name>a divalent metal cation</name>
        <dbReference type="ChEBI" id="CHEBI:60240"/>
    </ligand>
</feature>
<feature type="binding site" evidence="1">
    <location>
        <begin position="301"/>
        <end position="303"/>
    </location>
    <ligand>
        <name>4-CDP-2-C-methyl-D-erythritol 2-phosphate</name>
        <dbReference type="ChEBI" id="CHEBI:57919"/>
    </ligand>
</feature>
<feature type="binding site" evidence="1">
    <location>
        <begin position="377"/>
        <end position="380"/>
    </location>
    <ligand>
        <name>4-CDP-2-C-methyl-D-erythritol 2-phosphate</name>
        <dbReference type="ChEBI" id="CHEBI:57919"/>
    </ligand>
</feature>
<feature type="binding site" evidence="1">
    <location>
        <position position="384"/>
    </location>
    <ligand>
        <name>4-CDP-2-C-methyl-D-erythritol 2-phosphate</name>
        <dbReference type="ChEBI" id="CHEBI:57919"/>
    </ligand>
</feature>
<feature type="binding site" evidence="1">
    <location>
        <position position="387"/>
    </location>
    <ligand>
        <name>4-CDP-2-C-methyl-D-erythritol 2-phosphate</name>
        <dbReference type="ChEBI" id="CHEBI:57919"/>
    </ligand>
</feature>
<feature type="site" description="Transition state stabilizer" evidence="1">
    <location>
        <position position="26"/>
    </location>
</feature>
<feature type="site" description="Transition state stabilizer" evidence="1">
    <location>
        <position position="34"/>
    </location>
</feature>
<feature type="site" description="Positions MEP for the nucleophilic attack" evidence="1">
    <location>
        <position position="165"/>
    </location>
</feature>
<feature type="site" description="Positions MEP for the nucleophilic attack" evidence="1">
    <location>
        <position position="222"/>
    </location>
</feature>
<feature type="site" description="Transition state stabilizer" evidence="1">
    <location>
        <position position="279"/>
    </location>
</feature>
<feature type="site" description="Transition state stabilizer" evidence="1">
    <location>
        <position position="378"/>
    </location>
</feature>
<proteinExistence type="inferred from homology"/>
<name>ISPDF_RHILO</name>
<organism>
    <name type="scientific">Mesorhizobium japonicum (strain LMG 29417 / CECT 9101 / MAFF 303099)</name>
    <name type="common">Mesorhizobium loti (strain MAFF 303099)</name>
    <dbReference type="NCBI Taxonomy" id="266835"/>
    <lineage>
        <taxon>Bacteria</taxon>
        <taxon>Pseudomonadati</taxon>
        <taxon>Pseudomonadota</taxon>
        <taxon>Alphaproteobacteria</taxon>
        <taxon>Hyphomicrobiales</taxon>
        <taxon>Phyllobacteriaceae</taxon>
        <taxon>Mesorhizobium</taxon>
    </lineage>
</organism>
<gene>
    <name evidence="1" type="primary">ispDF</name>
    <name type="ordered locus">mll0395</name>
</gene>
<sequence>MTEASENASATGGVAVVIVAAGRGARAGQANGPKQYQNIGGRAVIAHTLEIFLAHPRTDRIVVAIHADDHELFRQAAGSQAERVTAIIGGPTRQESVRLGLLALKEHAPGQVLIHDAVRPFVDADLIDRTISAIGENEGALPALPVADTLKRESAAGVVAETVSRSGLHAAQTPQGFPYGPILAAHDKAFQLGRLDFTDDAAIAEWAHIPVKLVPGSPDNVKLTWARDIAMAHQRLSSERTHFPDIRTGNGYDVHAFEPGDHVTLCGVAIPHDKKLSGHSDADVGLHALTDALLATCGAGDIGTHFPPSDPQWKGAASRIFVEHAAKVVRQRGGRIANADITLICEAPRVGPHREAMTAALSRMLGISADRISIKATTNEKLGFVGREEGIAAIATASVVFPGEVPE</sequence>
<reference key="1">
    <citation type="journal article" date="2000" name="DNA Res.">
        <title>Complete genome structure of the nitrogen-fixing symbiotic bacterium Mesorhizobium loti.</title>
        <authorList>
            <person name="Kaneko T."/>
            <person name="Nakamura Y."/>
            <person name="Sato S."/>
            <person name="Asamizu E."/>
            <person name="Kato T."/>
            <person name="Sasamoto S."/>
            <person name="Watanabe A."/>
            <person name="Idesawa K."/>
            <person name="Ishikawa A."/>
            <person name="Kawashima K."/>
            <person name="Kimura T."/>
            <person name="Kishida Y."/>
            <person name="Kiyokawa C."/>
            <person name="Kohara M."/>
            <person name="Matsumoto M."/>
            <person name="Matsuno A."/>
            <person name="Mochizuki Y."/>
            <person name="Nakayama S."/>
            <person name="Nakazaki N."/>
            <person name="Shimpo S."/>
            <person name="Sugimoto M."/>
            <person name="Takeuchi C."/>
            <person name="Yamada M."/>
            <person name="Tabata S."/>
        </authorList>
    </citation>
    <scope>NUCLEOTIDE SEQUENCE [LARGE SCALE GENOMIC DNA]</scope>
    <source>
        <strain>LMG 29417 / CECT 9101 / MAFF 303099</strain>
    </source>
</reference>
<keyword id="KW-0414">Isoprene biosynthesis</keyword>
<keyword id="KW-0456">Lyase</keyword>
<keyword id="KW-0479">Metal-binding</keyword>
<keyword id="KW-0511">Multifunctional enzyme</keyword>
<keyword id="KW-0548">Nucleotidyltransferase</keyword>
<keyword id="KW-0808">Transferase</keyword>
<protein>
    <recommendedName>
        <fullName evidence="1">Bifunctional enzyme IspD/IspF</fullName>
    </recommendedName>
    <domain>
        <recommendedName>
            <fullName evidence="1">2-C-methyl-D-erythritol 4-phosphate cytidylyltransferase</fullName>
            <ecNumber evidence="1">2.7.7.60</ecNumber>
        </recommendedName>
        <alternativeName>
            <fullName evidence="1">4-diphosphocytidyl-2C-methyl-D-erythritol synthase</fullName>
        </alternativeName>
        <alternativeName>
            <fullName evidence="1">MEP cytidylyltransferase</fullName>
            <shortName evidence="1">MCT</shortName>
        </alternativeName>
    </domain>
    <domain>
        <recommendedName>
            <fullName evidence="1">2-C-methyl-D-erythritol 2,4-cyclodiphosphate synthase</fullName>
            <shortName evidence="1">MECDP-synthase</shortName>
            <shortName evidence="1">MECPP-synthase</shortName>
            <shortName evidence="1">MECPS</shortName>
            <ecNumber evidence="1">4.6.1.12</ecNumber>
        </recommendedName>
    </domain>
</protein>
<comment type="function">
    <text evidence="1">Bifunctional enzyme that catalyzes the formation of 4-diphosphocytidyl-2-C-methyl-D-erythritol from CTP and 2-C-methyl-D-erythritol 4-phosphate (MEP) (IspD), and catalyzes the conversion of 4-diphosphocytidyl-2-C-methyl-D-erythritol 2-phosphate (CDP-ME2P) to 2-C-methyl-D-erythritol 2,4-cyclodiphosphate (ME-CPP) with a corresponding release of cytidine 5-monophosphate (CMP) (IspF).</text>
</comment>
<comment type="catalytic activity">
    <reaction evidence="1">
        <text>2-C-methyl-D-erythritol 4-phosphate + CTP + H(+) = 4-CDP-2-C-methyl-D-erythritol + diphosphate</text>
        <dbReference type="Rhea" id="RHEA:13429"/>
        <dbReference type="ChEBI" id="CHEBI:15378"/>
        <dbReference type="ChEBI" id="CHEBI:33019"/>
        <dbReference type="ChEBI" id="CHEBI:37563"/>
        <dbReference type="ChEBI" id="CHEBI:57823"/>
        <dbReference type="ChEBI" id="CHEBI:58262"/>
        <dbReference type="EC" id="2.7.7.60"/>
    </reaction>
</comment>
<comment type="catalytic activity">
    <reaction evidence="1">
        <text>4-CDP-2-C-methyl-D-erythritol 2-phosphate = 2-C-methyl-D-erythritol 2,4-cyclic diphosphate + CMP</text>
        <dbReference type="Rhea" id="RHEA:23864"/>
        <dbReference type="ChEBI" id="CHEBI:57919"/>
        <dbReference type="ChEBI" id="CHEBI:58483"/>
        <dbReference type="ChEBI" id="CHEBI:60377"/>
        <dbReference type="EC" id="4.6.1.12"/>
    </reaction>
</comment>
<comment type="cofactor">
    <cofactor evidence="1">
        <name>a divalent metal cation</name>
        <dbReference type="ChEBI" id="CHEBI:60240"/>
    </cofactor>
</comment>
<comment type="pathway">
    <text evidence="1">Isoprenoid biosynthesis; isopentenyl diphosphate biosynthesis via DXP pathway; isopentenyl diphosphate from 1-deoxy-D-xylulose 5-phosphate: step 2/6.</text>
</comment>
<comment type="pathway">
    <text evidence="1">Isoprenoid biosynthesis; isopentenyl diphosphate biosynthesis via DXP pathway; isopentenyl diphosphate from 1-deoxy-D-xylulose 5-phosphate: step 4/6.</text>
</comment>
<comment type="similarity">
    <text evidence="1">In the N-terminal section; belongs to the IspD/TarI cytidylyltransferase family. IspD subfamily.</text>
</comment>
<comment type="similarity">
    <text evidence="1">In the C-terminal section; belongs to the IspF family.</text>
</comment>
<dbReference type="EC" id="2.7.7.60" evidence="1"/>
<dbReference type="EC" id="4.6.1.12" evidence="1"/>
<dbReference type="EMBL" id="BA000012">
    <property type="protein sequence ID" value="BAB47984.1"/>
    <property type="molecule type" value="Genomic_DNA"/>
</dbReference>
<dbReference type="RefSeq" id="WP_010909341.1">
    <property type="nucleotide sequence ID" value="NC_002678.2"/>
</dbReference>
<dbReference type="SMR" id="Q98MX9"/>
<dbReference type="KEGG" id="mlo:mll0395"/>
<dbReference type="eggNOG" id="COG0245">
    <property type="taxonomic scope" value="Bacteria"/>
</dbReference>
<dbReference type="eggNOG" id="COG1211">
    <property type="taxonomic scope" value="Bacteria"/>
</dbReference>
<dbReference type="HOGENOM" id="CLU_042800_1_0_5"/>
<dbReference type="UniPathway" id="UPA00056">
    <property type="reaction ID" value="UER00093"/>
</dbReference>
<dbReference type="UniPathway" id="UPA00056">
    <property type="reaction ID" value="UER00095"/>
</dbReference>
<dbReference type="Proteomes" id="UP000000552">
    <property type="component" value="Chromosome"/>
</dbReference>
<dbReference type="GO" id="GO:0008685">
    <property type="term" value="F:2-C-methyl-D-erythritol 2,4-cyclodiphosphate synthase activity"/>
    <property type="evidence" value="ECO:0007669"/>
    <property type="project" value="UniProtKB-UniRule"/>
</dbReference>
<dbReference type="GO" id="GO:0050518">
    <property type="term" value="F:2-C-methyl-D-erythritol 4-phosphate cytidylyltransferase activity"/>
    <property type="evidence" value="ECO:0007669"/>
    <property type="project" value="UniProtKB-UniRule"/>
</dbReference>
<dbReference type="GO" id="GO:0046872">
    <property type="term" value="F:metal ion binding"/>
    <property type="evidence" value="ECO:0007669"/>
    <property type="project" value="UniProtKB-KW"/>
</dbReference>
<dbReference type="GO" id="GO:0019288">
    <property type="term" value="P:isopentenyl diphosphate biosynthetic process, methylerythritol 4-phosphate pathway"/>
    <property type="evidence" value="ECO:0007669"/>
    <property type="project" value="UniProtKB-UniRule"/>
</dbReference>
<dbReference type="GO" id="GO:0016114">
    <property type="term" value="P:terpenoid biosynthetic process"/>
    <property type="evidence" value="ECO:0007669"/>
    <property type="project" value="InterPro"/>
</dbReference>
<dbReference type="CDD" id="cd02516">
    <property type="entry name" value="CDP-ME_synthetase"/>
    <property type="match status" value="1"/>
</dbReference>
<dbReference type="CDD" id="cd00554">
    <property type="entry name" value="MECDP_synthase"/>
    <property type="match status" value="1"/>
</dbReference>
<dbReference type="FunFam" id="3.90.550.10:FF:000003">
    <property type="entry name" value="2-C-methyl-D-erythritol 4-phosphate cytidylyltransferase"/>
    <property type="match status" value="1"/>
</dbReference>
<dbReference type="Gene3D" id="3.30.1330.50">
    <property type="entry name" value="2-C-methyl-D-erythritol 2,4-cyclodiphosphate synthase"/>
    <property type="match status" value="1"/>
</dbReference>
<dbReference type="Gene3D" id="3.90.550.10">
    <property type="entry name" value="Spore Coat Polysaccharide Biosynthesis Protein SpsA, Chain A"/>
    <property type="match status" value="1"/>
</dbReference>
<dbReference type="HAMAP" id="MF_00108">
    <property type="entry name" value="IspD"/>
    <property type="match status" value="1"/>
</dbReference>
<dbReference type="HAMAP" id="MF_01520">
    <property type="entry name" value="IspDF"/>
    <property type="match status" value="1"/>
</dbReference>
<dbReference type="HAMAP" id="MF_00107">
    <property type="entry name" value="IspF"/>
    <property type="match status" value="1"/>
</dbReference>
<dbReference type="InterPro" id="IPR001228">
    <property type="entry name" value="IspD"/>
</dbReference>
<dbReference type="InterPro" id="IPR026596">
    <property type="entry name" value="IspD/F"/>
</dbReference>
<dbReference type="InterPro" id="IPR034683">
    <property type="entry name" value="IspD/TarI"/>
</dbReference>
<dbReference type="InterPro" id="IPR018294">
    <property type="entry name" value="ISPD_synthase_CS"/>
</dbReference>
<dbReference type="InterPro" id="IPR003526">
    <property type="entry name" value="MECDP_synthase"/>
</dbReference>
<dbReference type="InterPro" id="IPR020555">
    <property type="entry name" value="MECDP_synthase_CS"/>
</dbReference>
<dbReference type="InterPro" id="IPR036571">
    <property type="entry name" value="MECDP_synthase_sf"/>
</dbReference>
<dbReference type="InterPro" id="IPR029044">
    <property type="entry name" value="Nucleotide-diphossugar_trans"/>
</dbReference>
<dbReference type="NCBIfam" id="TIGR00453">
    <property type="entry name" value="ispD"/>
    <property type="match status" value="1"/>
</dbReference>
<dbReference type="NCBIfam" id="TIGR00151">
    <property type="entry name" value="ispF"/>
    <property type="match status" value="1"/>
</dbReference>
<dbReference type="NCBIfam" id="NF006899">
    <property type="entry name" value="PRK09382.1"/>
    <property type="match status" value="1"/>
</dbReference>
<dbReference type="PANTHER" id="PTHR43181">
    <property type="entry name" value="2-C-METHYL-D-ERYTHRITOL 2,4-CYCLODIPHOSPHATE SYNTHASE, CHLOROPLASTIC"/>
    <property type="match status" value="1"/>
</dbReference>
<dbReference type="PANTHER" id="PTHR43181:SF1">
    <property type="entry name" value="2-C-METHYL-D-ERYTHRITOL 2,4-CYCLODIPHOSPHATE SYNTHASE, CHLOROPLASTIC"/>
    <property type="match status" value="1"/>
</dbReference>
<dbReference type="Pfam" id="PF01128">
    <property type="entry name" value="IspD"/>
    <property type="match status" value="1"/>
</dbReference>
<dbReference type="Pfam" id="PF02542">
    <property type="entry name" value="YgbB"/>
    <property type="match status" value="1"/>
</dbReference>
<dbReference type="SUPFAM" id="SSF69765">
    <property type="entry name" value="IpsF-like"/>
    <property type="match status" value="1"/>
</dbReference>
<dbReference type="SUPFAM" id="SSF53448">
    <property type="entry name" value="Nucleotide-diphospho-sugar transferases"/>
    <property type="match status" value="1"/>
</dbReference>
<dbReference type="PROSITE" id="PS01295">
    <property type="entry name" value="ISPD"/>
    <property type="match status" value="1"/>
</dbReference>
<dbReference type="PROSITE" id="PS01350">
    <property type="entry name" value="ISPF"/>
    <property type="match status" value="1"/>
</dbReference>
<evidence type="ECO:0000255" key="1">
    <source>
        <dbReference type="HAMAP-Rule" id="MF_01520"/>
    </source>
</evidence>